<dbReference type="EMBL" id="AP010656">
    <property type="protein sequence ID" value="BAG83343.1"/>
    <property type="molecule type" value="Genomic_DNA"/>
</dbReference>
<dbReference type="RefSeq" id="WP_012573104.1">
    <property type="nucleotide sequence ID" value="NC_011565.1"/>
</dbReference>
<dbReference type="SMR" id="B6YQ71"/>
<dbReference type="STRING" id="511995.CFPG_080"/>
<dbReference type="KEGG" id="aps:CFPG_080"/>
<dbReference type="eggNOG" id="COG0096">
    <property type="taxonomic scope" value="Bacteria"/>
</dbReference>
<dbReference type="HOGENOM" id="CLU_098428_0_2_10"/>
<dbReference type="OrthoDB" id="9802617at2"/>
<dbReference type="Proteomes" id="UP000000723">
    <property type="component" value="Chromosome"/>
</dbReference>
<dbReference type="GO" id="GO:1990904">
    <property type="term" value="C:ribonucleoprotein complex"/>
    <property type="evidence" value="ECO:0007669"/>
    <property type="project" value="UniProtKB-KW"/>
</dbReference>
<dbReference type="GO" id="GO:0005840">
    <property type="term" value="C:ribosome"/>
    <property type="evidence" value="ECO:0007669"/>
    <property type="project" value="UniProtKB-KW"/>
</dbReference>
<dbReference type="GO" id="GO:0019843">
    <property type="term" value="F:rRNA binding"/>
    <property type="evidence" value="ECO:0007669"/>
    <property type="project" value="UniProtKB-UniRule"/>
</dbReference>
<dbReference type="GO" id="GO:0003735">
    <property type="term" value="F:structural constituent of ribosome"/>
    <property type="evidence" value="ECO:0007669"/>
    <property type="project" value="InterPro"/>
</dbReference>
<dbReference type="GO" id="GO:0006412">
    <property type="term" value="P:translation"/>
    <property type="evidence" value="ECO:0007669"/>
    <property type="project" value="UniProtKB-UniRule"/>
</dbReference>
<dbReference type="FunFam" id="3.30.1370.30:FF:000002">
    <property type="entry name" value="30S ribosomal protein S8"/>
    <property type="match status" value="1"/>
</dbReference>
<dbReference type="FunFam" id="3.30.1490.10:FF:000001">
    <property type="entry name" value="30S ribosomal protein S8"/>
    <property type="match status" value="1"/>
</dbReference>
<dbReference type="Gene3D" id="3.30.1370.30">
    <property type="match status" value="1"/>
</dbReference>
<dbReference type="Gene3D" id="3.30.1490.10">
    <property type="match status" value="1"/>
</dbReference>
<dbReference type="HAMAP" id="MF_01302_B">
    <property type="entry name" value="Ribosomal_uS8_B"/>
    <property type="match status" value="1"/>
</dbReference>
<dbReference type="InterPro" id="IPR000630">
    <property type="entry name" value="Ribosomal_uS8"/>
</dbReference>
<dbReference type="InterPro" id="IPR047863">
    <property type="entry name" value="Ribosomal_uS8_CS"/>
</dbReference>
<dbReference type="InterPro" id="IPR035987">
    <property type="entry name" value="Ribosomal_uS8_sf"/>
</dbReference>
<dbReference type="NCBIfam" id="NF001109">
    <property type="entry name" value="PRK00136.1"/>
    <property type="match status" value="1"/>
</dbReference>
<dbReference type="PANTHER" id="PTHR11758">
    <property type="entry name" value="40S RIBOSOMAL PROTEIN S15A"/>
    <property type="match status" value="1"/>
</dbReference>
<dbReference type="Pfam" id="PF00410">
    <property type="entry name" value="Ribosomal_S8"/>
    <property type="match status" value="1"/>
</dbReference>
<dbReference type="SUPFAM" id="SSF56047">
    <property type="entry name" value="Ribosomal protein S8"/>
    <property type="match status" value="1"/>
</dbReference>
<dbReference type="PROSITE" id="PS00053">
    <property type="entry name" value="RIBOSOMAL_S8"/>
    <property type="match status" value="1"/>
</dbReference>
<name>RS8_AZOPC</name>
<protein>
    <recommendedName>
        <fullName evidence="1">Small ribosomal subunit protein uS8</fullName>
    </recommendedName>
    <alternativeName>
        <fullName evidence="2">30S ribosomal protein S8</fullName>
    </alternativeName>
</protein>
<feature type="chain" id="PRO_1000140508" description="Small ribosomal subunit protein uS8">
    <location>
        <begin position="1"/>
        <end position="131"/>
    </location>
</feature>
<organism>
    <name type="scientific">Azobacteroides pseudotrichonymphae genomovar. CFP2</name>
    <dbReference type="NCBI Taxonomy" id="511995"/>
    <lineage>
        <taxon>Bacteria</taxon>
        <taxon>Pseudomonadati</taxon>
        <taxon>Bacteroidota</taxon>
        <taxon>Bacteroidia</taxon>
        <taxon>Bacteroidales</taxon>
        <taxon>Candidatus Azobacteroides</taxon>
    </lineage>
</organism>
<proteinExistence type="inferred from homology"/>
<accession>B6YQ71</accession>
<gene>
    <name evidence="1" type="primary">rpsH</name>
    <name type="ordered locus">CFPG_080</name>
</gene>
<comment type="function">
    <text evidence="1">One of the primary rRNA binding proteins, it binds directly to 16S rRNA central domain where it helps coordinate assembly of the platform of the 30S subunit.</text>
</comment>
<comment type="subunit">
    <text evidence="1">Part of the 30S ribosomal subunit. Contacts proteins S5 and S12.</text>
</comment>
<comment type="similarity">
    <text evidence="1">Belongs to the universal ribosomal protein uS8 family.</text>
</comment>
<evidence type="ECO:0000255" key="1">
    <source>
        <dbReference type="HAMAP-Rule" id="MF_01302"/>
    </source>
</evidence>
<evidence type="ECO:0000305" key="2"/>
<keyword id="KW-1185">Reference proteome</keyword>
<keyword id="KW-0687">Ribonucleoprotein</keyword>
<keyword id="KW-0689">Ribosomal protein</keyword>
<keyword id="KW-0694">RNA-binding</keyword>
<keyword id="KW-0699">rRNA-binding</keyword>
<reference key="1">
    <citation type="journal article" date="2008" name="Science">
        <title>Genome of an endosymbiont coupling N2 fixation to cellulolysis within RT protist cells in termite gut.</title>
        <authorList>
            <person name="Hongoh Y."/>
            <person name="Sharma V.K."/>
            <person name="Prakash T."/>
            <person name="Noda S."/>
            <person name="Toh H."/>
            <person name="Taylor T.D."/>
            <person name="Kudo T."/>
            <person name="Sakaki Y."/>
            <person name="Toyoda A."/>
            <person name="Hattori M."/>
            <person name="Ohkuma M."/>
        </authorList>
    </citation>
    <scope>NUCLEOTIDE SEQUENCE [LARGE SCALE GENOMIC DNA]</scope>
</reference>
<sequence>MTDPIADYLTRLRNAIKAKHKIVEIPASNLKKEITKILCNKGYIWDYRFIEDKHQGKIKIAMKYSNINKVNAIKVLKRISKPGLRKYTSYRKMSRVLNGLGIAILSTSKGVMTDKEARDLKIGGEVLCYIY</sequence>